<accession>Q8TQR3</accession>
<gene>
    <name evidence="1" type="primary">grpE</name>
    <name type="ordered locus">MA_1477</name>
</gene>
<keyword id="KW-0143">Chaperone</keyword>
<keyword id="KW-0963">Cytoplasm</keyword>
<keyword id="KW-1185">Reference proteome</keyword>
<keyword id="KW-0346">Stress response</keyword>
<sequence length="209" mass="23405">MKKSTKKESTHSKEESQTQAGNSEARKSGPSTKKAGEKTAEPEKATAGSGTEKSPEAACREENELLKDQLFRLAADFDNFKKRTARQMEENRKAVLEQVLLDFVEVTDNFERALKSAQTAEDMGSIVSGIEQLSKQFFSILQKYGLERIKCEKAGEFDPHRHEAVQHIETSEVPDNTIVDVYKPGYSLNEKVIRPALVSVARNPDETEK</sequence>
<reference key="1">
    <citation type="journal article" date="2002" name="Genome Res.">
        <title>The genome of Methanosarcina acetivorans reveals extensive metabolic and physiological diversity.</title>
        <authorList>
            <person name="Galagan J.E."/>
            <person name="Nusbaum C."/>
            <person name="Roy A."/>
            <person name="Endrizzi M.G."/>
            <person name="Macdonald P."/>
            <person name="FitzHugh W."/>
            <person name="Calvo S."/>
            <person name="Engels R."/>
            <person name="Smirnov S."/>
            <person name="Atnoor D."/>
            <person name="Brown A."/>
            <person name="Allen N."/>
            <person name="Naylor J."/>
            <person name="Stange-Thomann N."/>
            <person name="DeArellano K."/>
            <person name="Johnson R."/>
            <person name="Linton L."/>
            <person name="McEwan P."/>
            <person name="McKernan K."/>
            <person name="Talamas J."/>
            <person name="Tirrell A."/>
            <person name="Ye W."/>
            <person name="Zimmer A."/>
            <person name="Barber R.D."/>
            <person name="Cann I."/>
            <person name="Graham D.E."/>
            <person name="Grahame D.A."/>
            <person name="Guss A.M."/>
            <person name="Hedderich R."/>
            <person name="Ingram-Smith C."/>
            <person name="Kuettner H.C."/>
            <person name="Krzycki J.A."/>
            <person name="Leigh J.A."/>
            <person name="Li W."/>
            <person name="Liu J."/>
            <person name="Mukhopadhyay B."/>
            <person name="Reeve J.N."/>
            <person name="Smith K."/>
            <person name="Springer T.A."/>
            <person name="Umayam L.A."/>
            <person name="White O."/>
            <person name="White R.H."/>
            <person name="de Macario E.C."/>
            <person name="Ferry J.G."/>
            <person name="Jarrell K.F."/>
            <person name="Jing H."/>
            <person name="Macario A.J.L."/>
            <person name="Paulsen I.T."/>
            <person name="Pritchett M."/>
            <person name="Sowers K.R."/>
            <person name="Swanson R.V."/>
            <person name="Zinder S.H."/>
            <person name="Lander E."/>
            <person name="Metcalf W.W."/>
            <person name="Birren B."/>
        </authorList>
    </citation>
    <scope>NUCLEOTIDE SEQUENCE [LARGE SCALE GENOMIC DNA]</scope>
    <source>
        <strain>ATCC 35395 / DSM 2834 / JCM 12185 / C2A</strain>
    </source>
</reference>
<organism>
    <name type="scientific">Methanosarcina acetivorans (strain ATCC 35395 / DSM 2834 / JCM 12185 / C2A)</name>
    <dbReference type="NCBI Taxonomy" id="188937"/>
    <lineage>
        <taxon>Archaea</taxon>
        <taxon>Methanobacteriati</taxon>
        <taxon>Methanobacteriota</taxon>
        <taxon>Stenosarchaea group</taxon>
        <taxon>Methanomicrobia</taxon>
        <taxon>Methanosarcinales</taxon>
        <taxon>Methanosarcinaceae</taxon>
        <taxon>Methanosarcina</taxon>
    </lineage>
</organism>
<feature type="chain" id="PRO_0000113908" description="Protein GrpE">
    <location>
        <begin position="1"/>
        <end position="209"/>
    </location>
</feature>
<feature type="region of interest" description="Disordered" evidence="2">
    <location>
        <begin position="1"/>
        <end position="61"/>
    </location>
</feature>
<feature type="compositionally biased region" description="Basic and acidic residues" evidence="2">
    <location>
        <begin position="1"/>
        <end position="16"/>
    </location>
</feature>
<feature type="compositionally biased region" description="Basic and acidic residues" evidence="2">
    <location>
        <begin position="34"/>
        <end position="44"/>
    </location>
</feature>
<proteinExistence type="inferred from homology"/>
<name>GRPE_METAC</name>
<comment type="function">
    <text evidence="1">Participates actively in the response to hyperosmotic and heat shock by preventing the aggregation of stress-denatured proteins, in association with DnaK and GrpE. It is the nucleotide exchange factor for DnaK and may function as a thermosensor. Unfolded proteins bind initially to DnaJ; upon interaction with the DnaJ-bound protein, DnaK hydrolyzes its bound ATP, resulting in the formation of a stable complex. GrpE releases ADP from DnaK; ATP binding to DnaK triggers the release of the substrate protein, thus completing the reaction cycle. Several rounds of ATP-dependent interactions between DnaJ, DnaK and GrpE are required for fully efficient folding.</text>
</comment>
<comment type="subunit">
    <text evidence="1">Homodimer.</text>
</comment>
<comment type="subcellular location">
    <subcellularLocation>
        <location evidence="1">Cytoplasm</location>
    </subcellularLocation>
</comment>
<comment type="similarity">
    <text evidence="1">Belongs to the GrpE family.</text>
</comment>
<protein>
    <recommendedName>
        <fullName evidence="1">Protein GrpE</fullName>
    </recommendedName>
    <alternativeName>
        <fullName evidence="1">HSP-70 cofactor</fullName>
    </alternativeName>
</protein>
<dbReference type="EMBL" id="AE010299">
    <property type="protein sequence ID" value="AAM04891.1"/>
    <property type="molecule type" value="Genomic_DNA"/>
</dbReference>
<dbReference type="RefSeq" id="WP_011021491.1">
    <property type="nucleotide sequence ID" value="NC_003552.1"/>
</dbReference>
<dbReference type="SMR" id="Q8TQR3"/>
<dbReference type="STRING" id="188937.MA_1477"/>
<dbReference type="EnsemblBacteria" id="AAM04891">
    <property type="protein sequence ID" value="AAM04891"/>
    <property type="gene ID" value="MA_1477"/>
</dbReference>
<dbReference type="GeneID" id="1473365"/>
<dbReference type="KEGG" id="mac:MA_1477"/>
<dbReference type="HOGENOM" id="CLU_057217_5_1_2"/>
<dbReference type="InParanoid" id="Q8TQR3"/>
<dbReference type="OrthoDB" id="372230at2157"/>
<dbReference type="PhylomeDB" id="Q8TQR3"/>
<dbReference type="Proteomes" id="UP000002487">
    <property type="component" value="Chromosome"/>
</dbReference>
<dbReference type="GO" id="GO:0005737">
    <property type="term" value="C:cytoplasm"/>
    <property type="evidence" value="ECO:0007669"/>
    <property type="project" value="UniProtKB-SubCell"/>
</dbReference>
<dbReference type="GO" id="GO:0000774">
    <property type="term" value="F:adenyl-nucleotide exchange factor activity"/>
    <property type="evidence" value="ECO:0000318"/>
    <property type="project" value="GO_Central"/>
</dbReference>
<dbReference type="GO" id="GO:0042803">
    <property type="term" value="F:protein homodimerization activity"/>
    <property type="evidence" value="ECO:0007669"/>
    <property type="project" value="InterPro"/>
</dbReference>
<dbReference type="GO" id="GO:0051087">
    <property type="term" value="F:protein-folding chaperone binding"/>
    <property type="evidence" value="ECO:0007669"/>
    <property type="project" value="InterPro"/>
</dbReference>
<dbReference type="GO" id="GO:0051082">
    <property type="term" value="F:unfolded protein binding"/>
    <property type="evidence" value="ECO:0000318"/>
    <property type="project" value="GO_Central"/>
</dbReference>
<dbReference type="GO" id="GO:0006457">
    <property type="term" value="P:protein folding"/>
    <property type="evidence" value="ECO:0007669"/>
    <property type="project" value="InterPro"/>
</dbReference>
<dbReference type="CDD" id="cd00446">
    <property type="entry name" value="GrpE"/>
    <property type="match status" value="1"/>
</dbReference>
<dbReference type="FunFam" id="2.30.22.10:FF:000001">
    <property type="entry name" value="Protein GrpE"/>
    <property type="match status" value="1"/>
</dbReference>
<dbReference type="FunFam" id="3.90.20.20:FF:000025">
    <property type="entry name" value="Protein GrpE"/>
    <property type="match status" value="1"/>
</dbReference>
<dbReference type="Gene3D" id="3.90.20.20">
    <property type="match status" value="1"/>
</dbReference>
<dbReference type="Gene3D" id="2.30.22.10">
    <property type="entry name" value="Head domain of nucleotide exchange factor GrpE"/>
    <property type="match status" value="1"/>
</dbReference>
<dbReference type="HAMAP" id="MF_01151">
    <property type="entry name" value="GrpE"/>
    <property type="match status" value="1"/>
</dbReference>
<dbReference type="InterPro" id="IPR000740">
    <property type="entry name" value="GrpE"/>
</dbReference>
<dbReference type="InterPro" id="IPR013805">
    <property type="entry name" value="GrpE_coiled_coil"/>
</dbReference>
<dbReference type="InterPro" id="IPR009012">
    <property type="entry name" value="GrpE_head"/>
</dbReference>
<dbReference type="NCBIfam" id="NF010750">
    <property type="entry name" value="PRK14153.1"/>
    <property type="match status" value="1"/>
</dbReference>
<dbReference type="PANTHER" id="PTHR21237">
    <property type="entry name" value="GRPE PROTEIN"/>
    <property type="match status" value="1"/>
</dbReference>
<dbReference type="PANTHER" id="PTHR21237:SF23">
    <property type="entry name" value="GRPE PROTEIN HOMOLOG, MITOCHONDRIAL"/>
    <property type="match status" value="1"/>
</dbReference>
<dbReference type="Pfam" id="PF01025">
    <property type="entry name" value="GrpE"/>
    <property type="match status" value="1"/>
</dbReference>
<dbReference type="PRINTS" id="PR00773">
    <property type="entry name" value="GRPEPROTEIN"/>
</dbReference>
<dbReference type="SUPFAM" id="SSF58014">
    <property type="entry name" value="Coiled-coil domain of nucleotide exchange factor GrpE"/>
    <property type="match status" value="1"/>
</dbReference>
<dbReference type="SUPFAM" id="SSF51064">
    <property type="entry name" value="Head domain of nucleotide exchange factor GrpE"/>
    <property type="match status" value="1"/>
</dbReference>
<dbReference type="PROSITE" id="PS01071">
    <property type="entry name" value="GRPE"/>
    <property type="match status" value="1"/>
</dbReference>
<evidence type="ECO:0000255" key="1">
    <source>
        <dbReference type="HAMAP-Rule" id="MF_01151"/>
    </source>
</evidence>
<evidence type="ECO:0000256" key="2">
    <source>
        <dbReference type="SAM" id="MobiDB-lite"/>
    </source>
</evidence>